<gene>
    <name type="primary">DNMT3A</name>
</gene>
<organism>
    <name type="scientific">Gallus gallus</name>
    <name type="common">Chicken</name>
    <dbReference type="NCBI Taxonomy" id="9031"/>
    <lineage>
        <taxon>Eukaryota</taxon>
        <taxon>Metazoa</taxon>
        <taxon>Chordata</taxon>
        <taxon>Craniata</taxon>
        <taxon>Vertebrata</taxon>
        <taxon>Euteleostomi</taxon>
        <taxon>Archelosauria</taxon>
        <taxon>Archosauria</taxon>
        <taxon>Dinosauria</taxon>
        <taxon>Saurischia</taxon>
        <taxon>Theropoda</taxon>
        <taxon>Coelurosauria</taxon>
        <taxon>Aves</taxon>
        <taxon>Neognathae</taxon>
        <taxon>Galloanserae</taxon>
        <taxon>Galliformes</taxon>
        <taxon>Phasianidae</taxon>
        <taxon>Phasianinae</taxon>
        <taxon>Gallus</taxon>
    </lineage>
</organism>
<name>DNM3A_CHICK</name>
<comment type="function">
    <text evidence="1">Required for genome-wide de novo methylation and is essential for development. DNA methylation is coordinated with methylation of histones. It modifies DNA in a non-processive manner and also methylates non-CpG sites. Acts as a transcriptional corepressor for ZNF238. Can actively repress transcription through the recruitment of HDAC activity. Also has weak auto-methylation activity on some Cys residue in absence of DNA.</text>
</comment>
<comment type="catalytic activity">
    <reaction evidence="1 6">
        <text>a 2'-deoxycytidine in DNA + S-adenosyl-L-methionine = a 5-methyl-2'-deoxycytidine in DNA + S-adenosyl-L-homocysteine + H(+)</text>
        <dbReference type="Rhea" id="RHEA:13681"/>
        <dbReference type="Rhea" id="RHEA-COMP:11369"/>
        <dbReference type="Rhea" id="RHEA-COMP:11370"/>
        <dbReference type="ChEBI" id="CHEBI:15378"/>
        <dbReference type="ChEBI" id="CHEBI:57856"/>
        <dbReference type="ChEBI" id="CHEBI:59789"/>
        <dbReference type="ChEBI" id="CHEBI:85452"/>
        <dbReference type="ChEBI" id="CHEBI:85454"/>
        <dbReference type="EC" id="2.1.1.37"/>
    </reaction>
    <physiologicalReaction direction="left-to-right" evidence="1">
        <dbReference type="Rhea" id="RHEA:13682"/>
    </physiologicalReaction>
</comment>
<comment type="catalytic activity">
    <reaction evidence="1">
        <text>L-cysteinyl-[protein] + S-adenosyl-L-methionine = S-methyl-L-cysteinyl-[protein] + S-adenosyl-L-homocysteine + H(+)</text>
        <dbReference type="Rhea" id="RHEA:66544"/>
        <dbReference type="Rhea" id="RHEA-COMP:10131"/>
        <dbReference type="Rhea" id="RHEA-COMP:10132"/>
        <dbReference type="ChEBI" id="CHEBI:15378"/>
        <dbReference type="ChEBI" id="CHEBI:29950"/>
        <dbReference type="ChEBI" id="CHEBI:57856"/>
        <dbReference type="ChEBI" id="CHEBI:59789"/>
        <dbReference type="ChEBI" id="CHEBI:82612"/>
    </reaction>
    <physiologicalReaction direction="left-to-right" evidence="1">
        <dbReference type="Rhea" id="RHEA:66545"/>
    </physiologicalReaction>
</comment>
<comment type="subcellular location">
    <subcellularLocation>
        <location evidence="2">Nucleus</location>
    </subcellularLocation>
    <subcellularLocation>
        <location evidence="2">Chromosome</location>
    </subcellularLocation>
    <subcellularLocation>
        <location evidence="2">Cytoplasm</location>
    </subcellularLocation>
    <text evidence="1">Accumulates in the major satellite repeats at pericentric heterochromatin.</text>
</comment>
<comment type="domain">
    <text evidence="1">The PWWP domain is essential for targeting to pericentric heterochromatin.</text>
</comment>
<comment type="similarity">
    <text evidence="5">Belongs to the class I-like SAM-binding methyltransferase superfamily. C5-methyltransferase family.</text>
</comment>
<keyword id="KW-0156">Chromatin regulator</keyword>
<keyword id="KW-0158">Chromosome</keyword>
<keyword id="KW-0963">Cytoplasm</keyword>
<keyword id="KW-0238">DNA-binding</keyword>
<keyword id="KW-0479">Metal-binding</keyword>
<keyword id="KW-0489">Methyltransferase</keyword>
<keyword id="KW-0539">Nucleus</keyword>
<keyword id="KW-1185">Reference proteome</keyword>
<keyword id="KW-0678">Repressor</keyword>
<keyword id="KW-0949">S-adenosyl-L-methionine</keyword>
<keyword id="KW-0804">Transcription</keyword>
<keyword id="KW-0805">Transcription regulation</keyword>
<keyword id="KW-0808">Transferase</keyword>
<keyword id="KW-0862">Zinc</keyword>
<keyword id="KW-0863">Zinc-finger</keyword>
<proteinExistence type="evidence at transcript level"/>
<accession>Q4W5Z4</accession>
<evidence type="ECO:0000250" key="1">
    <source>
        <dbReference type="UniProtKB" id="O88508"/>
    </source>
</evidence>
<evidence type="ECO:0000250" key="2">
    <source>
        <dbReference type="UniProtKB" id="Q9Y6K1"/>
    </source>
</evidence>
<evidence type="ECO:0000255" key="3">
    <source>
        <dbReference type="PROSITE-ProRule" id="PRU00162"/>
    </source>
</evidence>
<evidence type="ECO:0000255" key="4">
    <source>
        <dbReference type="PROSITE-ProRule" id="PRU00865"/>
    </source>
</evidence>
<evidence type="ECO:0000255" key="5">
    <source>
        <dbReference type="PROSITE-ProRule" id="PRU01016"/>
    </source>
</evidence>
<evidence type="ECO:0000255" key="6">
    <source>
        <dbReference type="PROSITE-ProRule" id="PRU10018"/>
    </source>
</evidence>
<evidence type="ECO:0000256" key="7">
    <source>
        <dbReference type="SAM" id="MobiDB-lite"/>
    </source>
</evidence>
<evidence type="ECO:0000305" key="8"/>
<protein>
    <recommendedName>
        <fullName>DNA (cytosine-5)-methyltransferase 3A</fullName>
        <shortName>Dnmt3a</shortName>
        <ecNumber evidence="1">2.1.1.37</ecNumber>
    </recommendedName>
    <alternativeName>
        <fullName evidence="8">Cysteine methyltransferase DNMT3A</fullName>
        <ecNumber evidence="1">2.1.1.-</ecNumber>
    </alternativeName>
</protein>
<reference key="1">
    <citation type="journal article" date="2006" name="Cytogenet. Genome Res.">
        <title>Evolution of the vertebrate DNMT3 gene family: a possible link between existence of DNMT3L and genomic imprinting.</title>
        <authorList>
            <person name="Yokomine T."/>
            <person name="Hata K."/>
            <person name="Tsudzuki M."/>
            <person name="Sasaki H."/>
        </authorList>
    </citation>
    <scope>NUCLEOTIDE SEQUENCE [MRNA]</scope>
</reference>
<dbReference type="EC" id="2.1.1.37" evidence="1"/>
<dbReference type="EC" id="2.1.1.-" evidence="1"/>
<dbReference type="EMBL" id="AB214886">
    <property type="protein sequence ID" value="BAD99023.1"/>
    <property type="molecule type" value="mRNA"/>
</dbReference>
<dbReference type="RefSeq" id="NP_001020003.1">
    <property type="nucleotide sequence ID" value="NM_001024832.1"/>
</dbReference>
<dbReference type="SMR" id="Q4W5Z4"/>
<dbReference type="FunCoup" id="Q4W5Z4">
    <property type="interactions" value="1584"/>
</dbReference>
<dbReference type="STRING" id="9031.ENSGALP00000043719"/>
<dbReference type="REBASE" id="11753">
    <property type="entry name" value="M.GgaDnmt3AP"/>
</dbReference>
<dbReference type="iPTMnet" id="Q4W5Z4"/>
<dbReference type="PaxDb" id="9031-ENSGALP00000006352"/>
<dbReference type="GeneID" id="421991"/>
<dbReference type="KEGG" id="gga:421991"/>
<dbReference type="CTD" id="1788"/>
<dbReference type="VEuPathDB" id="HostDB:geneid_421991"/>
<dbReference type="eggNOG" id="ENOG502QR6U">
    <property type="taxonomic scope" value="Eukaryota"/>
</dbReference>
<dbReference type="InParanoid" id="Q4W5Z4"/>
<dbReference type="OrthoDB" id="641149at2759"/>
<dbReference type="PhylomeDB" id="Q4W5Z4"/>
<dbReference type="PRO" id="PR:Q4W5Z4"/>
<dbReference type="Proteomes" id="UP000000539">
    <property type="component" value="Unassembled WGS sequence"/>
</dbReference>
<dbReference type="GO" id="GO:0005737">
    <property type="term" value="C:cytoplasm"/>
    <property type="evidence" value="ECO:0000250"/>
    <property type="project" value="UniProtKB"/>
</dbReference>
<dbReference type="GO" id="GO:0000791">
    <property type="term" value="C:euchromatin"/>
    <property type="evidence" value="ECO:0000250"/>
    <property type="project" value="UniProtKB"/>
</dbReference>
<dbReference type="GO" id="GO:0016363">
    <property type="term" value="C:nuclear matrix"/>
    <property type="evidence" value="ECO:0000250"/>
    <property type="project" value="UniProtKB"/>
</dbReference>
<dbReference type="GO" id="GO:0005634">
    <property type="term" value="C:nucleus"/>
    <property type="evidence" value="ECO:0000250"/>
    <property type="project" value="UniProtKB"/>
</dbReference>
<dbReference type="GO" id="GO:0001046">
    <property type="term" value="F:core promoter sequence-specific DNA binding"/>
    <property type="evidence" value="ECO:0000314"/>
    <property type="project" value="AgBase"/>
</dbReference>
<dbReference type="GO" id="GO:0003886">
    <property type="term" value="F:DNA (cytosine-5-)-methyltransferase activity"/>
    <property type="evidence" value="ECO:0000250"/>
    <property type="project" value="UniProtKB"/>
</dbReference>
<dbReference type="GO" id="GO:0106363">
    <property type="term" value="F:protein-cysteine methyltransferase activity"/>
    <property type="evidence" value="ECO:0000250"/>
    <property type="project" value="UniProtKB"/>
</dbReference>
<dbReference type="GO" id="GO:0008270">
    <property type="term" value="F:zinc ion binding"/>
    <property type="evidence" value="ECO:0007669"/>
    <property type="project" value="UniProtKB-KW"/>
</dbReference>
<dbReference type="GO" id="GO:0032259">
    <property type="term" value="P:methylation"/>
    <property type="evidence" value="ECO:0007669"/>
    <property type="project" value="UniProtKB-KW"/>
</dbReference>
<dbReference type="GO" id="GO:0045892">
    <property type="term" value="P:negative regulation of DNA-templated transcription"/>
    <property type="evidence" value="ECO:0000318"/>
    <property type="project" value="GO_Central"/>
</dbReference>
<dbReference type="GO" id="GO:0044027">
    <property type="term" value="P:negative regulation of gene expression via chromosomal CpG island methylation"/>
    <property type="evidence" value="ECO:0000250"/>
    <property type="project" value="UniProtKB"/>
</dbReference>
<dbReference type="GO" id="GO:0071774">
    <property type="term" value="P:response to fibroblast growth factor"/>
    <property type="evidence" value="ECO:0000314"/>
    <property type="project" value="AgBase"/>
</dbReference>
<dbReference type="GO" id="GO:0009408">
    <property type="term" value="P:response to heat"/>
    <property type="evidence" value="ECO:0000314"/>
    <property type="project" value="AgBase"/>
</dbReference>
<dbReference type="CDD" id="cd11729">
    <property type="entry name" value="ADDz_Dnmt3a"/>
    <property type="match status" value="1"/>
</dbReference>
<dbReference type="CDD" id="cd20154">
    <property type="entry name" value="PWWP_DNMT3A"/>
    <property type="match status" value="1"/>
</dbReference>
<dbReference type="FunFam" id="3.40.50.150:FF:000008">
    <property type="entry name" value="DNA (Cytosine-5)-methyltransferase 3A isoform X1"/>
    <property type="match status" value="1"/>
</dbReference>
<dbReference type="FunFam" id="2.30.30.140:FF:000006">
    <property type="entry name" value="DNA (Cytosine-5)-methyltransferase 3B isoform 3"/>
    <property type="match status" value="1"/>
</dbReference>
<dbReference type="FunFam" id="3.40.50.150:FF:000011">
    <property type="entry name" value="DNA methyltransferase 3 alpha"/>
    <property type="match status" value="1"/>
</dbReference>
<dbReference type="Gene3D" id="2.30.30.140">
    <property type="match status" value="1"/>
</dbReference>
<dbReference type="Gene3D" id="1.10.720.50">
    <property type="entry name" value="PWWP, helical domain"/>
    <property type="match status" value="1"/>
</dbReference>
<dbReference type="Gene3D" id="3.40.50.150">
    <property type="entry name" value="Vaccinia Virus protein VP39"/>
    <property type="match status" value="2"/>
</dbReference>
<dbReference type="InterPro" id="IPR025766">
    <property type="entry name" value="ADD"/>
</dbReference>
<dbReference type="InterPro" id="IPR044108">
    <property type="entry name" value="ADD_DNMT3A"/>
</dbReference>
<dbReference type="InterPro" id="IPR018117">
    <property type="entry name" value="C5_DNA_meth_AS"/>
</dbReference>
<dbReference type="InterPro" id="IPR001525">
    <property type="entry name" value="C5_MeTfrase"/>
</dbReference>
<dbReference type="InterPro" id="IPR054724">
    <property type="entry name" value="DNM3A_N"/>
</dbReference>
<dbReference type="InterPro" id="IPR040552">
    <property type="entry name" value="DNMT3_ADD_GATA1-like"/>
</dbReference>
<dbReference type="InterPro" id="IPR049554">
    <property type="entry name" value="DNMT3_ADD_PHD"/>
</dbReference>
<dbReference type="InterPro" id="IPR000313">
    <property type="entry name" value="PWWP_dom"/>
</dbReference>
<dbReference type="InterPro" id="IPR029063">
    <property type="entry name" value="SAM-dependent_MTases_sf"/>
</dbReference>
<dbReference type="PANTHER" id="PTHR23068:SF10">
    <property type="entry name" value="DNA (CYTOSINE-5)-METHYLTRANSFERASE 3A"/>
    <property type="match status" value="1"/>
</dbReference>
<dbReference type="PANTHER" id="PTHR23068">
    <property type="entry name" value="DNA CYTOSINE-5- -METHYLTRANSFERASE 3-RELATED"/>
    <property type="match status" value="1"/>
</dbReference>
<dbReference type="Pfam" id="PF17980">
    <property type="entry name" value="ADD_DNMT3"/>
    <property type="match status" value="1"/>
</dbReference>
<dbReference type="Pfam" id="PF00145">
    <property type="entry name" value="DNA_methylase"/>
    <property type="match status" value="1"/>
</dbReference>
<dbReference type="Pfam" id="PF22855">
    <property type="entry name" value="DNM3A_N"/>
    <property type="match status" value="1"/>
</dbReference>
<dbReference type="Pfam" id="PF21255">
    <property type="entry name" value="DNMT3_ADD_GATA1-like"/>
    <property type="match status" value="1"/>
</dbReference>
<dbReference type="Pfam" id="PF00855">
    <property type="entry name" value="PWWP"/>
    <property type="match status" value="1"/>
</dbReference>
<dbReference type="SMART" id="SM00293">
    <property type="entry name" value="PWWP"/>
    <property type="match status" value="1"/>
</dbReference>
<dbReference type="SUPFAM" id="SSF53335">
    <property type="entry name" value="S-adenosyl-L-methionine-dependent methyltransferases"/>
    <property type="match status" value="1"/>
</dbReference>
<dbReference type="SUPFAM" id="SSF63748">
    <property type="entry name" value="Tudor/PWWP/MBT"/>
    <property type="match status" value="1"/>
</dbReference>
<dbReference type="PROSITE" id="PS51533">
    <property type="entry name" value="ADD"/>
    <property type="match status" value="1"/>
</dbReference>
<dbReference type="PROSITE" id="PS00094">
    <property type="entry name" value="C5_MTASE_1"/>
    <property type="match status" value="1"/>
</dbReference>
<dbReference type="PROSITE" id="PS50812">
    <property type="entry name" value="PWWP"/>
    <property type="match status" value="1"/>
</dbReference>
<dbReference type="PROSITE" id="PS51679">
    <property type="entry name" value="SAM_MT_C5"/>
    <property type="match status" value="1"/>
</dbReference>
<sequence>MVESSDTPKDTAAVPKCPPPCPEASPAEPLPNGDLEADGAQWKGTEEGGASPKSGRPEEDETESLADGETGRALENGRCTPKEGLDAPADEGELAPSDPQKKRGRRKLLEATEKSKEEKEENNFDSLKMEGSRGRLRGGLGWESSLRQRPMQRHTFQAGDPYYISKRKRDEWLARWKREAEKKAKVIAVMNVVEETPRAEPQKEEEASPPASQQPTDPASPNVATTPEPVVADAVDKNTSKSADDEPEYEDGRGLGIGELVWGKLRGFSWWPGRIVSWWMTGRSRAAEGTRWVMWFGDGKFSVVCVEKLLPLSSFSSAFHQATYNKQPMYRKAIYEVLQVASSRAGKIFPACPENDETDTSKVVEIQNKQMIEWALGGFQPSGPKGLEPPEEERNPYKEVYTEMWVEPEAAAYAPPPPAKKPRKSTTEKPKVKEIIDERTRERLVYEVRQKCRNIEDICISCGSLNVTLEHPLFIGGMCQNCKNCFLECAYQYDDDGYQSYCTICCGGREVLMCGNNNCCRCFCVECVDLLVGPGAAQAAIKEDPWNCYMCGHKGVYGLLRRREDWPSRLQMFFANNHDQEFDPPKVYPPVPAEKRKPIRVLSLFDGIATGLLVLKDLGIQVDRYIASEVCEDSITVGMVRHQGKIMYVGDVRNVTQKHIQEWGPFDLVIGGSPCNDLSIVNPARKGLYEGTGRLFFEFYRLLHEARPKEGDDRPFFWLFENVVAMGVSDKRDISRFLESNPVMIDAKEVSAAHRARYFWGNLPGMNRPLASTVNDKLELQECLEHGRIAKFSKVRTITTRSNSIKQGKDQHFPVFMNEKEDILWCTEMERVFGFPVHYTDVSNMSRLARQRLLGRSWSVPVIRHLFAPLKEYFACV</sequence>
<feature type="chain" id="PRO_0000313031" description="DNA (cytosine-5)-methyltransferase 3A">
    <location>
        <begin position="1"/>
        <end position="877"/>
    </location>
</feature>
<feature type="domain" description="PWWP" evidence="3">
    <location>
        <begin position="226"/>
        <end position="284"/>
    </location>
</feature>
<feature type="domain" description="ADD" evidence="4">
    <location>
        <begin position="447"/>
        <end position="579"/>
    </location>
</feature>
<feature type="domain" description="SAM-dependent MTase C5-type" evidence="5">
    <location>
        <begin position="599"/>
        <end position="877"/>
    </location>
</feature>
<feature type="zinc finger region" description="GATA-type; atypical" evidence="4">
    <location>
        <begin position="458"/>
        <end position="488"/>
    </location>
</feature>
<feature type="zinc finger region" description="PHD-type; atypical" evidence="4">
    <location>
        <begin position="499"/>
        <end position="555"/>
    </location>
</feature>
<feature type="region of interest" description="Disordered" evidence="7">
    <location>
        <begin position="1"/>
        <end position="154"/>
    </location>
</feature>
<feature type="region of interest" description="Disordered" evidence="7">
    <location>
        <begin position="194"/>
        <end position="250"/>
    </location>
</feature>
<feature type="region of interest" description="Disordered" evidence="7">
    <location>
        <begin position="412"/>
        <end position="431"/>
    </location>
</feature>
<feature type="compositionally biased region" description="Basic and acidic residues" evidence="7">
    <location>
        <begin position="107"/>
        <end position="133"/>
    </location>
</feature>
<feature type="compositionally biased region" description="Basic and acidic residues" evidence="7">
    <location>
        <begin position="195"/>
        <end position="206"/>
    </location>
</feature>
<feature type="compositionally biased region" description="Polar residues" evidence="7">
    <location>
        <begin position="210"/>
        <end position="225"/>
    </location>
</feature>
<feature type="compositionally biased region" description="Basic and acidic residues" evidence="7">
    <location>
        <begin position="234"/>
        <end position="244"/>
    </location>
</feature>
<feature type="active site" evidence="5 6">
    <location>
        <position position="675"/>
    </location>
</feature>
<feature type="binding site" evidence="2">
    <location>
        <begin position="606"/>
        <end position="610"/>
    </location>
    <ligand>
        <name>S-adenosyl-L-methionine</name>
        <dbReference type="ChEBI" id="CHEBI:59789"/>
    </ligand>
</feature>
<feature type="binding site" evidence="2">
    <location>
        <position position="629"/>
    </location>
    <ligand>
        <name>S-adenosyl-L-methionine</name>
        <dbReference type="ChEBI" id="CHEBI:59789"/>
    </ligand>
</feature>
<feature type="binding site" evidence="2">
    <location>
        <begin position="651"/>
        <end position="653"/>
    </location>
    <ligand>
        <name>S-adenosyl-L-methionine</name>
        <dbReference type="ChEBI" id="CHEBI:59789"/>
    </ligand>
</feature>
<feature type="binding site" evidence="2">
    <location>
        <begin position="856"/>
        <end position="858"/>
    </location>
    <ligand>
        <name>S-adenosyl-L-methionine</name>
        <dbReference type="ChEBI" id="CHEBI:59789"/>
    </ligand>
</feature>